<proteinExistence type="evidence at protein level"/>
<feature type="signal peptide" evidence="3">
    <location>
        <begin position="1"/>
        <end position="25"/>
    </location>
</feature>
<feature type="chain" id="PRO_0000315936" description="1,3-beta-glucanosyltransferase gas4">
    <location>
        <begin position="26"/>
        <end position="432"/>
    </location>
</feature>
<feature type="propeptide" id="PRO_0000315937" description="Removed in mature form" evidence="3 6">
    <location>
        <begin position="433"/>
        <end position="456"/>
    </location>
</feature>
<feature type="region of interest" description="Disordered" evidence="4">
    <location>
        <begin position="334"/>
        <end position="353"/>
    </location>
</feature>
<feature type="region of interest" description="Disordered" evidence="4">
    <location>
        <begin position="384"/>
        <end position="434"/>
    </location>
</feature>
<feature type="compositionally biased region" description="Low complexity" evidence="4">
    <location>
        <begin position="417"/>
        <end position="434"/>
    </location>
</feature>
<feature type="active site" description="Proton donor" evidence="1">
    <location>
        <position position="157"/>
    </location>
</feature>
<feature type="active site" description="Nucleophile" evidence="1">
    <location>
        <position position="257"/>
    </location>
</feature>
<feature type="binding site" evidence="2">
    <location>
        <position position="86"/>
    </location>
    <ligand>
        <name>(1,3-beta-D-glucosyl)n</name>
        <dbReference type="ChEBI" id="CHEBI:37671"/>
        <label>1</label>
        <note>donor substrate</note>
    </ligand>
</feature>
<feature type="binding site" evidence="2">
    <location>
        <position position="156"/>
    </location>
    <ligand>
        <name>(1,3-beta-D-glucosyl)n</name>
        <dbReference type="ChEBI" id="CHEBI:37671"/>
        <label>1</label>
        <note>donor substrate</note>
    </ligand>
</feature>
<feature type="binding site" evidence="2">
    <location>
        <position position="157"/>
    </location>
    <ligand>
        <name>(1,3-beta-D-glucosyl)n</name>
        <dbReference type="ChEBI" id="CHEBI:37671"/>
        <label>2</label>
        <note>acceptor substrate</note>
    </ligand>
</feature>
<feature type="binding site" evidence="2">
    <location>
        <position position="197"/>
    </location>
    <ligand>
        <name>(1,3-beta-D-glucosyl)n</name>
        <dbReference type="ChEBI" id="CHEBI:37671"/>
        <label>2</label>
        <note>acceptor substrate</note>
    </ligand>
</feature>
<feature type="binding site" evidence="2">
    <location>
        <position position="202"/>
    </location>
    <ligand>
        <name>(1,3-beta-D-glucosyl)n</name>
        <dbReference type="ChEBI" id="CHEBI:37671"/>
        <label>2</label>
        <note>acceptor substrate</note>
    </ligand>
</feature>
<feature type="binding site" evidence="2">
    <location>
        <position position="296"/>
    </location>
    <ligand>
        <name>(1,3-beta-D-glucosyl)n</name>
        <dbReference type="ChEBI" id="CHEBI:37671"/>
        <label>1</label>
        <note>donor substrate</note>
    </ligand>
</feature>
<feature type="lipid moiety-binding region" description="GPI-anchor amidated serine" evidence="3 6">
    <location>
        <position position="432"/>
    </location>
</feature>
<feature type="glycosylation site" description="N-linked (GlcNAc...) asparagine" evidence="3">
    <location>
        <position position="248"/>
    </location>
</feature>
<feature type="glycosylation site" description="N-linked (GlcNAc...) asparagine" evidence="3">
    <location>
        <position position="353"/>
    </location>
</feature>
<feature type="glycosylation site" description="N-linked (GlcNAc...) asparagine" evidence="3">
    <location>
        <position position="415"/>
    </location>
</feature>
<feature type="disulfide bond" evidence="2">
    <location>
        <begin position="68"/>
        <end position="97"/>
    </location>
</feature>
<feature type="disulfide bond" evidence="2">
    <location>
        <begin position="211"/>
        <end position="350"/>
    </location>
</feature>
<feature type="disulfide bond" evidence="2">
    <location>
        <begin position="229"/>
        <end position="260"/>
    </location>
</feature>
<feature type="mutagenesis site" description="Leads to abnormal spore morphology and unviable spores." evidence="5">
    <original>E</original>
    <variation>Q</variation>
    <location>
        <position position="157"/>
    </location>
</feature>
<feature type="mutagenesis site" description="Leads to abnormal spore morphology and unviable spores." evidence="5">
    <original>E</original>
    <variation>Q</variation>
    <location>
        <position position="257"/>
    </location>
</feature>
<protein>
    <recommendedName>
        <fullName>1,3-beta-glucanosyltransferase gas4</fullName>
        <ecNumber>2.4.1.-</ecNumber>
    </recommendedName>
</protein>
<reference evidence="8" key="1">
    <citation type="journal article" date="2002" name="Nature">
        <title>The genome sequence of Schizosaccharomyces pombe.</title>
        <authorList>
            <person name="Wood V."/>
            <person name="Gwilliam R."/>
            <person name="Rajandream M.A."/>
            <person name="Lyne M.H."/>
            <person name="Lyne R."/>
            <person name="Stewart A."/>
            <person name="Sgouros J.G."/>
            <person name="Peat N."/>
            <person name="Hayles J."/>
            <person name="Baker S.G."/>
            <person name="Basham D."/>
            <person name="Bowman S."/>
            <person name="Brooks K."/>
            <person name="Brown D."/>
            <person name="Brown S."/>
            <person name="Chillingworth T."/>
            <person name="Churcher C.M."/>
            <person name="Collins M."/>
            <person name="Connor R."/>
            <person name="Cronin A."/>
            <person name="Davis P."/>
            <person name="Feltwell T."/>
            <person name="Fraser A."/>
            <person name="Gentles S."/>
            <person name="Goble A."/>
            <person name="Hamlin N."/>
            <person name="Harris D.E."/>
            <person name="Hidalgo J."/>
            <person name="Hodgson G."/>
            <person name="Holroyd S."/>
            <person name="Hornsby T."/>
            <person name="Howarth S."/>
            <person name="Huckle E.J."/>
            <person name="Hunt S."/>
            <person name="Jagels K."/>
            <person name="James K.D."/>
            <person name="Jones L."/>
            <person name="Jones M."/>
            <person name="Leather S."/>
            <person name="McDonald S."/>
            <person name="McLean J."/>
            <person name="Mooney P."/>
            <person name="Moule S."/>
            <person name="Mungall K.L."/>
            <person name="Murphy L.D."/>
            <person name="Niblett D."/>
            <person name="Odell C."/>
            <person name="Oliver K."/>
            <person name="O'Neil S."/>
            <person name="Pearson D."/>
            <person name="Quail M.A."/>
            <person name="Rabbinowitsch E."/>
            <person name="Rutherford K.M."/>
            <person name="Rutter S."/>
            <person name="Saunders D."/>
            <person name="Seeger K."/>
            <person name="Sharp S."/>
            <person name="Skelton J."/>
            <person name="Simmonds M.N."/>
            <person name="Squares R."/>
            <person name="Squares S."/>
            <person name="Stevens K."/>
            <person name="Taylor K."/>
            <person name="Taylor R.G."/>
            <person name="Tivey A."/>
            <person name="Walsh S.V."/>
            <person name="Warren T."/>
            <person name="Whitehead S."/>
            <person name="Woodward J.R."/>
            <person name="Volckaert G."/>
            <person name="Aert R."/>
            <person name="Robben J."/>
            <person name="Grymonprez B."/>
            <person name="Weltjens I."/>
            <person name="Vanstreels E."/>
            <person name="Rieger M."/>
            <person name="Schaefer M."/>
            <person name="Mueller-Auer S."/>
            <person name="Gabel C."/>
            <person name="Fuchs M."/>
            <person name="Duesterhoeft A."/>
            <person name="Fritzc C."/>
            <person name="Holzer E."/>
            <person name="Moestl D."/>
            <person name="Hilbert H."/>
            <person name="Borzym K."/>
            <person name="Langer I."/>
            <person name="Beck A."/>
            <person name="Lehrach H."/>
            <person name="Reinhardt R."/>
            <person name="Pohl T.M."/>
            <person name="Eger P."/>
            <person name="Zimmermann W."/>
            <person name="Wedler H."/>
            <person name="Wambutt R."/>
            <person name="Purnelle B."/>
            <person name="Goffeau A."/>
            <person name="Cadieu E."/>
            <person name="Dreano S."/>
            <person name="Gloux S."/>
            <person name="Lelaure V."/>
            <person name="Mottier S."/>
            <person name="Galibert F."/>
            <person name="Aves S.J."/>
            <person name="Xiang Z."/>
            <person name="Hunt C."/>
            <person name="Moore K."/>
            <person name="Hurst S.M."/>
            <person name="Lucas M."/>
            <person name="Rochet M."/>
            <person name="Gaillardin C."/>
            <person name="Tallada V.A."/>
            <person name="Garzon A."/>
            <person name="Thode G."/>
            <person name="Daga R.R."/>
            <person name="Cruzado L."/>
            <person name="Jimenez J."/>
            <person name="Sanchez M."/>
            <person name="del Rey F."/>
            <person name="Benito J."/>
            <person name="Dominguez A."/>
            <person name="Revuelta J.L."/>
            <person name="Moreno S."/>
            <person name="Armstrong J."/>
            <person name="Forsburg S.L."/>
            <person name="Cerutti L."/>
            <person name="Lowe T."/>
            <person name="McCombie W.R."/>
            <person name="Paulsen I."/>
            <person name="Potashkin J."/>
            <person name="Shpakovski G.V."/>
            <person name="Ussery D."/>
            <person name="Barrell B.G."/>
            <person name="Nurse P."/>
        </authorList>
    </citation>
    <scope>NUCLEOTIDE SEQUENCE [LARGE SCALE GENOMIC DNA]</scope>
    <source>
        <strain>972 / ATCC 24843</strain>
    </source>
</reference>
<reference evidence="7" key="2">
    <citation type="journal article" date="2003" name="Yeast">
        <title>Genome-wide identification of fungal GPI proteins.</title>
        <authorList>
            <person name="De Groot P.W."/>
            <person name="Hellingwerf K.J."/>
            <person name="Klis F.M."/>
        </authorList>
    </citation>
    <scope>GPI-ANCHOR AT SER-432</scope>
</reference>
<reference key="3">
    <citation type="journal article" date="2008" name="Mol. Microbiol.">
        <title>The beta-1,3-glucanosyltransferase gas4p is essential for ascospore wall maturation and spore viability in Schizosaccharomyces pombe.</title>
        <authorList>
            <person name="de Medina-Redondo M."/>
            <person name="Arnaiz-Pita Y."/>
            <person name="Fontaine T."/>
            <person name="Del Rey F."/>
            <person name="Latge J.P."/>
            <person name="Vazquez de Aldana C.R."/>
        </authorList>
    </citation>
    <scope>FUNCTION</scope>
    <scope>INDUCTION</scope>
    <scope>SUBCELLULAR LOCATION</scope>
    <scope>MUTAGENESIS OF GLU-157 AND GLU-257</scope>
</reference>
<keyword id="KW-1003">Cell membrane</keyword>
<keyword id="KW-0961">Cell wall biogenesis/degradation</keyword>
<keyword id="KW-1015">Disulfide bond</keyword>
<keyword id="KW-0325">Glycoprotein</keyword>
<keyword id="KW-0336">GPI-anchor</keyword>
<keyword id="KW-0449">Lipoprotein</keyword>
<keyword id="KW-0472">Membrane</keyword>
<keyword id="KW-1185">Reference proteome</keyword>
<keyword id="KW-0732">Signal</keyword>
<keyword id="KW-0808">Transferase</keyword>
<name>GAS4_SCHPO</name>
<gene>
    <name type="primary">gas4</name>
    <name type="ORF">SPBC342.03</name>
</gene>
<comment type="function">
    <text evidence="5">Splits internally a 1,3-beta-glucan molecule and transfers the newly generated reducing end (the donor) to the non-reducing end of another 1,3-beta-glucan molecule (the acceptor) forming a 1,3-beta linkage, resulting in the elongation of 1,3-beta-glucan chains in the cell wall. Involved in spore wall assembly.</text>
</comment>
<comment type="subcellular location">
    <subcellularLocation>
        <location evidence="5">Cell membrane</location>
        <topology evidence="5">Lipid-anchor</topology>
        <topology evidence="5">GPI-anchor</topology>
    </subcellularLocation>
    <text>Localizes to the ascospore periphery during sporulation.</text>
</comment>
<comment type="induction">
    <text evidence="5">Strongly induced during sporulation.</text>
</comment>
<comment type="similarity">
    <text evidence="3">Belongs to the glycosyl hydrolase 72 family.</text>
</comment>
<sequence length="456" mass="50763">MGVANIIYALFLLGPSIFLKATAQTHPIVIKGNAFFDSKTNERFYIRGVDYQPGGSSSLVDPLASRSCKKDVEIFKKLGINTVRVYQVDNSADHDKCMNALSEAGIYVILDLNTYRHSISRAHPALSYNKVYLQHLFATIDAFKGYDNVLGFFSGNEVVNDEDTTAITWVKAVTRDVKAYIKKHSDRHIPVGYSAADVAENRLQLAHYFNCGDESERADFYAFNMYEWCGYSSMTVSGYYDRIKEFSNYSIPLFLSEFGCNTVEINDDTTPNRPFTEIEAIYSHDMTPVFSGGLVYEYSAEPNHYGLVVIDKDDERRVSRNFITLMKQYAKTPNPKGDGGYKKAGSPSKCPANSTQFNAWEKLPEMPEGAKIYMEKGAGEPLGIEGPTNMWSPFHDGDDDESTSRRPKPKNKPSNVTSTTSYTSGMTSSSESGSSKIGVAFCQALFITVLIATLSF</sequence>
<accession>Q9Y7Y7</accession>
<organism>
    <name type="scientific">Schizosaccharomyces pombe (strain 972 / ATCC 24843)</name>
    <name type="common">Fission yeast</name>
    <dbReference type="NCBI Taxonomy" id="284812"/>
    <lineage>
        <taxon>Eukaryota</taxon>
        <taxon>Fungi</taxon>
        <taxon>Dikarya</taxon>
        <taxon>Ascomycota</taxon>
        <taxon>Taphrinomycotina</taxon>
        <taxon>Schizosaccharomycetes</taxon>
        <taxon>Schizosaccharomycetales</taxon>
        <taxon>Schizosaccharomycetaceae</taxon>
        <taxon>Schizosaccharomyces</taxon>
    </lineage>
</organism>
<evidence type="ECO:0000250" key="1">
    <source>
        <dbReference type="UniProtKB" id="O74687"/>
    </source>
</evidence>
<evidence type="ECO:0000250" key="2">
    <source>
        <dbReference type="UniProtKB" id="Q06135"/>
    </source>
</evidence>
<evidence type="ECO:0000255" key="3"/>
<evidence type="ECO:0000256" key="4">
    <source>
        <dbReference type="SAM" id="MobiDB-lite"/>
    </source>
</evidence>
<evidence type="ECO:0000269" key="5">
    <source>
    </source>
</evidence>
<evidence type="ECO:0000303" key="6">
    <source>
    </source>
</evidence>
<evidence type="ECO:0000305" key="7"/>
<evidence type="ECO:0000312" key="8">
    <source>
        <dbReference type="EMBL" id="CAB46773.1"/>
    </source>
</evidence>
<dbReference type="EC" id="2.4.1.-"/>
<dbReference type="EMBL" id="CU329671">
    <property type="protein sequence ID" value="CAB46773.1"/>
    <property type="molecule type" value="Genomic_DNA"/>
</dbReference>
<dbReference type="PIR" id="T40276">
    <property type="entry name" value="T40276"/>
</dbReference>
<dbReference type="RefSeq" id="NP_596746.1">
    <property type="nucleotide sequence ID" value="NM_001023766.2"/>
</dbReference>
<dbReference type="SMR" id="Q9Y7Y7"/>
<dbReference type="BioGRID" id="277436">
    <property type="interactions" value="6"/>
</dbReference>
<dbReference type="FunCoup" id="Q9Y7Y7">
    <property type="interactions" value="85"/>
</dbReference>
<dbReference type="STRING" id="284812.Q9Y7Y7"/>
<dbReference type="CAZy" id="GH72">
    <property type="family name" value="Glycoside Hydrolase Family 72"/>
</dbReference>
<dbReference type="GlyCosmos" id="Q9Y7Y7">
    <property type="glycosylation" value="3 sites, No reported glycans"/>
</dbReference>
<dbReference type="PaxDb" id="4896-SPBC342.03.1"/>
<dbReference type="EnsemblFungi" id="SPBC342.03.1">
    <property type="protein sequence ID" value="SPBC342.03.1:pep"/>
    <property type="gene ID" value="SPBC342.03"/>
</dbReference>
<dbReference type="GeneID" id="2540920"/>
<dbReference type="KEGG" id="spo:2540920"/>
<dbReference type="PomBase" id="SPBC342.03">
    <property type="gene designation" value="gas4"/>
</dbReference>
<dbReference type="VEuPathDB" id="FungiDB:SPBC342.03"/>
<dbReference type="eggNOG" id="ENOG502QRZZ">
    <property type="taxonomic scope" value="Eukaryota"/>
</dbReference>
<dbReference type="HOGENOM" id="CLU_021855_1_0_1"/>
<dbReference type="InParanoid" id="Q9Y7Y7"/>
<dbReference type="OMA" id="MRAYIKA"/>
<dbReference type="PhylomeDB" id="Q9Y7Y7"/>
<dbReference type="PRO" id="PR:Q9Y7Y7"/>
<dbReference type="Proteomes" id="UP000002485">
    <property type="component" value="Chromosome II"/>
</dbReference>
<dbReference type="GO" id="GO:0005886">
    <property type="term" value="C:plasma membrane"/>
    <property type="evidence" value="ECO:0007669"/>
    <property type="project" value="UniProtKB-SubCell"/>
</dbReference>
<dbReference type="GO" id="GO:0005628">
    <property type="term" value="C:prospore membrane"/>
    <property type="evidence" value="ECO:0000314"/>
    <property type="project" value="PomBase"/>
</dbReference>
<dbReference type="GO" id="GO:0098552">
    <property type="term" value="C:side of membrane"/>
    <property type="evidence" value="ECO:0007669"/>
    <property type="project" value="UniProtKB-KW"/>
</dbReference>
<dbReference type="GO" id="GO:0042124">
    <property type="term" value="F:1,3-beta-glucanosyltransferase activity"/>
    <property type="evidence" value="ECO:0000314"/>
    <property type="project" value="PomBase"/>
</dbReference>
<dbReference type="GO" id="GO:0034412">
    <property type="term" value="P:ascospore wall beta-glucan biosynthetic process"/>
    <property type="evidence" value="ECO:0000314"/>
    <property type="project" value="PomBase"/>
</dbReference>
<dbReference type="GO" id="GO:0031321">
    <property type="term" value="P:ascospore-type prospore assembly"/>
    <property type="evidence" value="ECO:0000315"/>
    <property type="project" value="PomBase"/>
</dbReference>
<dbReference type="GO" id="GO:0071555">
    <property type="term" value="P:cell wall organization"/>
    <property type="evidence" value="ECO:0007669"/>
    <property type="project" value="UniProtKB-KW"/>
</dbReference>
<dbReference type="GO" id="GO:0071970">
    <property type="term" value="P:fungal-type cell wall (1-&gt;3)-beta-D-glucan biosynthetic process"/>
    <property type="evidence" value="ECO:0000314"/>
    <property type="project" value="PomBase"/>
</dbReference>
<dbReference type="FunFam" id="3.20.20.80:FF:000032">
    <property type="entry name" value="1,3-beta-glucanosyltransferase"/>
    <property type="match status" value="1"/>
</dbReference>
<dbReference type="Gene3D" id="3.20.20.80">
    <property type="entry name" value="Glycosidases"/>
    <property type="match status" value="1"/>
</dbReference>
<dbReference type="InterPro" id="IPR004886">
    <property type="entry name" value="Glucanosyltransferase"/>
</dbReference>
<dbReference type="InterPro" id="IPR017853">
    <property type="entry name" value="Glycoside_hydrolase_SF"/>
</dbReference>
<dbReference type="PANTHER" id="PTHR31468">
    <property type="entry name" value="1,3-BETA-GLUCANOSYLTRANSFERASE GAS1"/>
    <property type="match status" value="1"/>
</dbReference>
<dbReference type="PANTHER" id="PTHR31468:SF5">
    <property type="entry name" value="1,3-BETA-GLUCANOSYLTRANSFERASE GAS5"/>
    <property type="match status" value="1"/>
</dbReference>
<dbReference type="Pfam" id="PF03198">
    <property type="entry name" value="Glyco_hydro_72"/>
    <property type="match status" value="1"/>
</dbReference>
<dbReference type="SUPFAM" id="SSF51445">
    <property type="entry name" value="(Trans)glycosidases"/>
    <property type="match status" value="1"/>
</dbReference>